<organism>
    <name type="scientific">Homo sapiens</name>
    <name type="common">Human</name>
    <dbReference type="NCBI Taxonomy" id="9606"/>
    <lineage>
        <taxon>Eukaryota</taxon>
        <taxon>Metazoa</taxon>
        <taxon>Chordata</taxon>
        <taxon>Craniata</taxon>
        <taxon>Vertebrata</taxon>
        <taxon>Euteleostomi</taxon>
        <taxon>Mammalia</taxon>
        <taxon>Eutheria</taxon>
        <taxon>Euarchontoglires</taxon>
        <taxon>Primates</taxon>
        <taxon>Haplorrhini</taxon>
        <taxon>Catarrhini</taxon>
        <taxon>Hominidae</taxon>
        <taxon>Homo</taxon>
    </lineage>
</organism>
<name>PODXL_HUMAN</name>
<sequence length="558" mass="58635">MRCALALSALLLLLSTPPLLPSSPSPSPSPSQNATQTTTDSSNKTAPTPASSVTIMATDTAQQSTVPTSKANEILASVKATTLGVSSDSPGTTTLAQQVSGPVNTTVARGGGSGNPTTTIESPKSTKSADTTTVATSTATAKPNTTSSQNGAEDTTNSGGKSSHSVTTDLTSTKAEHLTTPHPTSPLSPRQPTSTHPVATPTSSGHDHLMKISSSSSTVAIPGYTFTSPGMTTTLLETVFHHVSQAGLELLTSGDLPTLASQSAGITASSVISQRTQQTSSQMPASSTAPSSQETVQPTSPATALRTPTLPETMSSSPTAASTTHRYPKTPSPTVAHESNWAKCEDLETQTQSEKQLVLNLTGNTLCAGGASDEKLISLICRAVKATFNPAQDKCGIRLASVPGSQTVVVKEITIHTKLPAKDVYERLKDKWDELKEAGVSDMKLGDQGPPEEAEDRFSMPLIITIVCMASFLLLVAALYGCCHQRLSQRKDQQRLTEELQTVENGYHDNPTLEVMETSSEMQEKKVVSLNGELGDSWIVPLDNLTKDDLDEEEDTHL</sequence>
<dbReference type="EMBL" id="U97519">
    <property type="protein sequence ID" value="AAB61574.1"/>
    <property type="molecule type" value="mRNA"/>
</dbReference>
<dbReference type="EMBL" id="AK223573">
    <property type="protein sequence ID" value="BAD97293.1"/>
    <property type="molecule type" value="mRNA"/>
</dbReference>
<dbReference type="EMBL" id="AC008264">
    <property type="status" value="NOT_ANNOTATED_CDS"/>
    <property type="molecule type" value="Genomic_DNA"/>
</dbReference>
<dbReference type="EMBL" id="CH236950">
    <property type="protein sequence ID" value="EAL24080.1"/>
    <property type="molecule type" value="Genomic_DNA"/>
</dbReference>
<dbReference type="EMBL" id="CH471070">
    <property type="protein sequence ID" value="EAW83786.1"/>
    <property type="molecule type" value="Genomic_DNA"/>
</dbReference>
<dbReference type="EMBL" id="BC093730">
    <property type="protein sequence ID" value="AAH93730.1"/>
    <property type="molecule type" value="mRNA"/>
</dbReference>
<dbReference type="EMBL" id="BC112035">
    <property type="protein sequence ID" value="AAI12036.1"/>
    <property type="molecule type" value="mRNA"/>
</dbReference>
<dbReference type="EMBL" id="BP234810">
    <property type="status" value="NOT_ANNOTATED_CDS"/>
    <property type="molecule type" value="mRNA"/>
</dbReference>
<dbReference type="CCDS" id="CCDS34755.1">
    <molecule id="O00592-1"/>
</dbReference>
<dbReference type="CCDS" id="CCDS47714.1">
    <molecule id="O00592-2"/>
</dbReference>
<dbReference type="RefSeq" id="NP_001018121.1">
    <molecule id="O00592-1"/>
    <property type="nucleotide sequence ID" value="NM_001018111.3"/>
</dbReference>
<dbReference type="RefSeq" id="NP_005388.2">
    <molecule id="O00592-2"/>
    <property type="nucleotide sequence ID" value="NM_005397.3"/>
</dbReference>
<dbReference type="BioGRID" id="111416">
    <property type="interactions" value="84"/>
</dbReference>
<dbReference type="CORUM" id="O00592"/>
<dbReference type="DIP" id="DIP-58638N"/>
<dbReference type="FunCoup" id="O00592">
    <property type="interactions" value="268"/>
</dbReference>
<dbReference type="IntAct" id="O00592">
    <property type="interactions" value="35"/>
</dbReference>
<dbReference type="STRING" id="9606.ENSP00000367817"/>
<dbReference type="TCDB" id="8.A.187.1.1">
    <property type="family name" value="the podocalyxin (podxl) family"/>
</dbReference>
<dbReference type="GlyConnect" id="1617">
    <property type="glycosylation" value="22 N-Linked glycans (2 sites)"/>
</dbReference>
<dbReference type="GlyCosmos" id="O00592">
    <property type="glycosylation" value="13 sites, 28 glycans"/>
</dbReference>
<dbReference type="GlyGen" id="O00592">
    <property type="glycosylation" value="68 sites, 55 N-linked glycans (3 sites), 9 O-linked glycans (60 sites)"/>
</dbReference>
<dbReference type="iPTMnet" id="O00592"/>
<dbReference type="PhosphoSitePlus" id="O00592"/>
<dbReference type="SwissPalm" id="O00592"/>
<dbReference type="BioMuta" id="PODXL"/>
<dbReference type="jPOST" id="O00592"/>
<dbReference type="MassIVE" id="O00592"/>
<dbReference type="PaxDb" id="9606-ENSP00000367817"/>
<dbReference type="PeptideAtlas" id="O00592"/>
<dbReference type="ProteomicsDB" id="47992">
    <molecule id="O00592-1"/>
</dbReference>
<dbReference type="ProteomicsDB" id="47993">
    <molecule id="O00592-2"/>
</dbReference>
<dbReference type="Pumba" id="O00592"/>
<dbReference type="ABCD" id="O00592">
    <property type="antibodies" value="2 sequenced antibodies"/>
</dbReference>
<dbReference type="Antibodypedia" id="971">
    <property type="antibodies" value="1259 antibodies from 45 providers"/>
</dbReference>
<dbReference type="DNASU" id="5420"/>
<dbReference type="Ensembl" id="ENST00000322985.9">
    <molecule id="O00592-2"/>
    <property type="protein sequence ID" value="ENSP00000319782.9"/>
    <property type="gene ID" value="ENSG00000128567.17"/>
</dbReference>
<dbReference type="Ensembl" id="ENST00000378555.8">
    <molecule id="O00592-1"/>
    <property type="protein sequence ID" value="ENSP00000367817.3"/>
    <property type="gene ID" value="ENSG00000128567.17"/>
</dbReference>
<dbReference type="GeneID" id="5420"/>
<dbReference type="KEGG" id="hsa:5420"/>
<dbReference type="MANE-Select" id="ENST00000378555.8">
    <property type="protein sequence ID" value="ENSP00000367817.3"/>
    <property type="RefSeq nucleotide sequence ID" value="NM_001018111.3"/>
    <property type="RefSeq protein sequence ID" value="NP_001018121.1"/>
</dbReference>
<dbReference type="UCSC" id="uc003vqw.5">
    <molecule id="O00592-1"/>
    <property type="organism name" value="human"/>
</dbReference>
<dbReference type="AGR" id="HGNC:9171"/>
<dbReference type="CTD" id="5420"/>
<dbReference type="DisGeNET" id="5420"/>
<dbReference type="GeneCards" id="PODXL"/>
<dbReference type="HGNC" id="HGNC:9171">
    <property type="gene designation" value="PODXL"/>
</dbReference>
<dbReference type="HPA" id="ENSG00000128567">
    <property type="expression patterns" value="Tissue enhanced (kidney)"/>
</dbReference>
<dbReference type="MalaCards" id="PODXL"/>
<dbReference type="MIM" id="602632">
    <property type="type" value="gene"/>
</dbReference>
<dbReference type="neXtProt" id="NX_O00592"/>
<dbReference type="OpenTargets" id="ENSG00000128567"/>
<dbReference type="Orphanet" id="391411">
    <property type="disease" value="Atypical juvenile parkinsonism"/>
</dbReference>
<dbReference type="Orphanet" id="2828">
    <property type="disease" value="Young-onset Parkinson disease"/>
</dbReference>
<dbReference type="PharmGKB" id="PA33493"/>
<dbReference type="VEuPathDB" id="HostDB:ENSG00000128567"/>
<dbReference type="eggNOG" id="ENOG502S2JU">
    <property type="taxonomic scope" value="Eukaryota"/>
</dbReference>
<dbReference type="GeneTree" id="ENSGT00730000111314"/>
<dbReference type="HOGENOM" id="CLU_032485_0_0_1"/>
<dbReference type="InParanoid" id="O00592"/>
<dbReference type="OMA" id="GNNWTKC"/>
<dbReference type="OrthoDB" id="9948358at2759"/>
<dbReference type="PAN-GO" id="O00592">
    <property type="GO annotations" value="6 GO annotations based on evolutionary models"/>
</dbReference>
<dbReference type="PhylomeDB" id="O00592"/>
<dbReference type="TreeFam" id="TF333564"/>
<dbReference type="PathwayCommons" id="O00592"/>
<dbReference type="SignaLink" id="O00592"/>
<dbReference type="SIGNOR" id="O00592"/>
<dbReference type="BioGRID-ORCS" id="5420">
    <property type="hits" value="13 hits in 1147 CRISPR screens"/>
</dbReference>
<dbReference type="ChiTaRS" id="PODXL">
    <property type="organism name" value="human"/>
</dbReference>
<dbReference type="GeneWiki" id="PODXL"/>
<dbReference type="GenomeRNAi" id="5420"/>
<dbReference type="Pharos" id="O00592">
    <property type="development level" value="Tbio"/>
</dbReference>
<dbReference type="PRO" id="PR:O00592"/>
<dbReference type="Proteomes" id="UP000005640">
    <property type="component" value="Chromosome 7"/>
</dbReference>
<dbReference type="RNAct" id="O00592">
    <property type="molecule type" value="protein"/>
</dbReference>
<dbReference type="Bgee" id="ENSG00000128567">
    <property type="expression patterns" value="Expressed in renal glomerulus and 198 other cell types or tissues"/>
</dbReference>
<dbReference type="ExpressionAtlas" id="O00592">
    <property type="expression patterns" value="baseline and differential"/>
</dbReference>
<dbReference type="GO" id="GO:0016324">
    <property type="term" value="C:apical plasma membrane"/>
    <property type="evidence" value="ECO:0000250"/>
    <property type="project" value="UniProtKB"/>
</dbReference>
<dbReference type="GO" id="GO:0034451">
    <property type="term" value="C:centriolar satellite"/>
    <property type="evidence" value="ECO:0000314"/>
    <property type="project" value="HPA"/>
</dbReference>
<dbReference type="GO" id="GO:0005737">
    <property type="term" value="C:cytoplasm"/>
    <property type="evidence" value="ECO:0000314"/>
    <property type="project" value="UniProtKB"/>
</dbReference>
<dbReference type="GO" id="GO:0005783">
    <property type="term" value="C:endoplasmic reticulum"/>
    <property type="evidence" value="ECO:0000314"/>
    <property type="project" value="HPA"/>
</dbReference>
<dbReference type="GO" id="GO:0070062">
    <property type="term" value="C:extracellular exosome"/>
    <property type="evidence" value="ECO:0000314"/>
    <property type="project" value="UniProtKB"/>
</dbReference>
<dbReference type="GO" id="GO:0005615">
    <property type="term" value="C:extracellular space"/>
    <property type="evidence" value="ECO:0007005"/>
    <property type="project" value="UniProtKB"/>
</dbReference>
<dbReference type="GO" id="GO:0030175">
    <property type="term" value="C:filopodium"/>
    <property type="evidence" value="ECO:0000314"/>
    <property type="project" value="UniProtKB"/>
</dbReference>
<dbReference type="GO" id="GO:0043231">
    <property type="term" value="C:intracellular membrane-bounded organelle"/>
    <property type="evidence" value="ECO:0000314"/>
    <property type="project" value="HPA"/>
</dbReference>
<dbReference type="GO" id="GO:0030027">
    <property type="term" value="C:lamellipodium"/>
    <property type="evidence" value="ECO:0000314"/>
    <property type="project" value="UniProtKB"/>
</dbReference>
<dbReference type="GO" id="GO:0045121">
    <property type="term" value="C:membrane raft"/>
    <property type="evidence" value="ECO:0007669"/>
    <property type="project" value="UniProtKB-SubCell"/>
</dbReference>
<dbReference type="GO" id="GO:0031528">
    <property type="term" value="C:microvillus membrane"/>
    <property type="evidence" value="ECO:0000250"/>
    <property type="project" value="UniProtKB"/>
</dbReference>
<dbReference type="GO" id="GO:0005730">
    <property type="term" value="C:nucleolus"/>
    <property type="evidence" value="ECO:0000314"/>
    <property type="project" value="HPA"/>
</dbReference>
<dbReference type="GO" id="GO:0005886">
    <property type="term" value="C:plasma membrane"/>
    <property type="evidence" value="ECO:0000314"/>
    <property type="project" value="HPA"/>
</dbReference>
<dbReference type="GO" id="GO:0001726">
    <property type="term" value="C:ruffle"/>
    <property type="evidence" value="ECO:0000314"/>
    <property type="project" value="UniProtKB"/>
</dbReference>
<dbReference type="GO" id="GO:0036057">
    <property type="term" value="C:slit diaphragm"/>
    <property type="evidence" value="ECO:0000250"/>
    <property type="project" value="UniProtKB"/>
</dbReference>
<dbReference type="GO" id="GO:0007155">
    <property type="term" value="P:cell adhesion"/>
    <property type="evidence" value="ECO:0007669"/>
    <property type="project" value="UniProtKB-KW"/>
</dbReference>
<dbReference type="GO" id="GO:0016477">
    <property type="term" value="P:cell migration"/>
    <property type="evidence" value="ECO:0000250"/>
    <property type="project" value="UniProtKB"/>
</dbReference>
<dbReference type="GO" id="GO:0072175">
    <property type="term" value="P:epithelial tube formation"/>
    <property type="evidence" value="ECO:0000250"/>
    <property type="project" value="UniProtKB"/>
</dbReference>
<dbReference type="GO" id="GO:0007162">
    <property type="term" value="P:negative regulation of cell adhesion"/>
    <property type="evidence" value="ECO:0000250"/>
    <property type="project" value="UniProtKB"/>
</dbReference>
<dbReference type="GO" id="GO:0022408">
    <property type="term" value="P:negative regulation of cell-cell adhesion"/>
    <property type="evidence" value="ECO:0000250"/>
    <property type="project" value="UniProtKB"/>
</dbReference>
<dbReference type="GO" id="GO:0072015">
    <property type="term" value="P:podocyte development"/>
    <property type="evidence" value="ECO:0000250"/>
    <property type="project" value="UniProtKB"/>
</dbReference>
<dbReference type="GO" id="GO:0030335">
    <property type="term" value="P:positive regulation of cell migration"/>
    <property type="evidence" value="ECO:0000314"/>
    <property type="project" value="UniProtKB"/>
</dbReference>
<dbReference type="GO" id="GO:0033634">
    <property type="term" value="P:positive regulation of cell-cell adhesion mediated by integrin"/>
    <property type="evidence" value="ECO:0000314"/>
    <property type="project" value="UniProtKB"/>
</dbReference>
<dbReference type="GO" id="GO:0032534">
    <property type="term" value="P:regulation of microvillus assembly"/>
    <property type="evidence" value="ECO:0000250"/>
    <property type="project" value="UniProtKB"/>
</dbReference>
<dbReference type="InterPro" id="IPR013836">
    <property type="entry name" value="CD34/Podocalyxin"/>
</dbReference>
<dbReference type="InterPro" id="IPR017403">
    <property type="entry name" value="PODXL"/>
</dbReference>
<dbReference type="PANTHER" id="PTHR12067">
    <property type="entry name" value="PODOCALYXIN"/>
    <property type="match status" value="1"/>
</dbReference>
<dbReference type="PANTHER" id="PTHR12067:SF5">
    <property type="entry name" value="PODOCALYXIN"/>
    <property type="match status" value="1"/>
</dbReference>
<dbReference type="Pfam" id="PF06365">
    <property type="entry name" value="CD34_antigen"/>
    <property type="match status" value="1"/>
</dbReference>
<dbReference type="PIRSF" id="PIRSF038143">
    <property type="entry name" value="Podocalyxin-like_p1"/>
    <property type="match status" value="1"/>
</dbReference>
<dbReference type="PRINTS" id="PR02045">
    <property type="entry name" value="F138DOMAIN"/>
</dbReference>
<proteinExistence type="evidence at protein level"/>
<comment type="function">
    <text evidence="5 6">Involved in the regulation of both adhesion and cell morphology and cancer progression. Functions as an anti-adhesive molecule that maintains an open filtration pathway between neighboring foot processes in the podocyte by charge repulsion. Acts as a pro-adhesive molecule, enhancing the adherence of cells to immobilized ligands, increasing the rate of migration and cell-cell contacts in an integrin-dependent manner. Induces the formation of apical actin-dependent microvilli. Involved in the formation of a preapical plasma membrane subdomain to set up initial epithelial polarization and the apical lumen formation during renal tubulogenesis. Plays a role in cancer development and aggressiveness by inducing cell migration and invasion through its interaction with the actin-binding protein EZR. Affects EZR-dependent signaling events, leading to increased activities of the MAPK and PI3K pathways in cancer cells.</text>
</comment>
<comment type="subunit">
    <text evidence="1 5">Monomer; when associated with the membrane raft. Oligomer; when integrated in the apical membrane. Interacts (via the C-terminal PDZ-binding motif DTHL) with NHERF1 (via the PDZ domains); the interaction is not detected in glomerular epithelium cells, take place early in the secretory pathway and is necessary for its apical membrane sorting. Found in a complex with EZR, PODXL and NHERF2. Associates with the actin cytoskeleton through complex formation with EZR and NHERF2. Interacts (via the C-terminal PDZ-binding motif DTHL) with NHERF2 (via the PDZ 1 domain); interaction is detected in glomerular epithelium cells (By similarity). Interacts with EZR.</text>
</comment>
<comment type="interaction">
    <interactant intactId="EBI-6897823">
        <id>O00592</id>
    </interactant>
    <interactant intactId="EBI-297509">
        <id>P46940</id>
        <label>IQGAP1</label>
    </interactant>
    <organismsDiffer>false</organismsDiffer>
    <experiments>4</experiments>
</comment>
<comment type="interaction">
    <interactant intactId="EBI-6897823">
        <id>O00592</id>
    </interactant>
    <interactant intactId="EBI-1149760">
        <id>Q15599</id>
        <label>NHERF2</label>
    </interactant>
    <organismsDiffer>false</organismsDiffer>
    <experiments>2</experiments>
</comment>
<comment type="interaction">
    <interactant intactId="EBI-12407415">
        <id>O00592-2</id>
    </interactant>
    <interactant intactId="EBI-744081">
        <id>Q96EQ0</id>
        <label>SGTB</label>
    </interactant>
    <organismsDiffer>false</organismsDiffer>
    <experiments>3</experiments>
</comment>
<comment type="interaction">
    <interactant intactId="EBI-12407415">
        <id>O00592-2</id>
    </interactant>
    <interactant intactId="EBI-947187">
        <id>Q9UHD9</id>
        <label>UBQLN2</label>
    </interactant>
    <organismsDiffer>false</organismsDiffer>
    <experiments>5</experiments>
</comment>
<comment type="subcellular location">
    <subcellularLocation>
        <location>Apical cell membrane</location>
    </subcellularLocation>
    <subcellularLocation>
        <location>Cell projection</location>
        <location>Lamellipodium</location>
    </subcellularLocation>
    <subcellularLocation>
        <location>Cell projection</location>
        <location>Filopodium</location>
    </subcellularLocation>
    <subcellularLocation>
        <location>Cell projection</location>
        <location>Ruffle</location>
    </subcellularLocation>
    <subcellularLocation>
        <location evidence="1">Cell projection</location>
        <location evidence="1">Microvillus</location>
    </subcellularLocation>
    <subcellularLocation>
        <location evidence="1">Membrane raft</location>
    </subcellularLocation>
    <subcellularLocation>
        <location evidence="12">Membrane</location>
        <topology evidence="12">Single-pass type I membrane protein</topology>
    </subcellularLocation>
    <text evidence="1">In single attached epithelial cells is restricted to a preapical pole on the free plasma membrane whereas other apical and basolateral proteins are not yet polarized. Colocalizes with NHERF2 at the apical plasma membrane during epithelial polarization. Colocalizes with NHERF1 at the trans-Golgi network (transiently) and at the apical plasma membrane. Its association with the membrane raft is transient. Colocalizes with actin filaments, EZR and NHERF1 in a punctate pattern at the apical cell surface where microvilli form. Colocalizes with EZR and NHERF2 at the apical cell membrane of glomerular epithelium cells (By similarity). Forms granular, punctuated pattern, forming patches, preferentially adopting a polar distribution, located on the migrating poles of the cell or forming clusters along the terminal ends of filipodia establishing contact with the endothelial cells. Colocalizes with the submembrane actin of lamellipodia, particularly associated with ruffles. Colocalizes with vinculin at protrusions of cells. Colocalizes with ITGB1. Colocalizes with PARD3, PRKCI, EXOC5, OCLN, RAB11A and RAB8A in apical membrane initiation sites (AMIS) during the generation of apical surface and luminogenesis (By similarity).</text>
</comment>
<comment type="alternative products">
    <event type="alternative splicing"/>
    <isoform>
        <id>O00592-1</id>
        <name>1</name>
        <sequence type="displayed"/>
    </isoform>
    <isoform>
        <id>O00592-2</id>
        <name>2</name>
        <sequence type="described" ref="VSP_037220"/>
    </isoform>
</comment>
<comment type="tissue specificity">
    <text>Glomerular epithelium cell (podocyte).</text>
</comment>
<comment type="domain">
    <text evidence="1">Both the O-glycan-rich domain of the extracellular domain and the C-terminus PDZ-binding motif (DTHL) in the cytoplasmic tail harbor an apical sorting signal. The cytoplasmic domain is necessary for the apical membrane targeting and renal tubulogenesis. The cytoplasmic C-terminus PDZ-binding motif (DTHL) is essential for interaction with NHERF1 and for targeting NHERF1 to the apical cell membrane. The extracellular domain is necessary for microvillus formation (By similarity). The large highly anionic extracellular domain allows to maintain open filtration pathways between neighboring podocyte foot processes.</text>
</comment>
<comment type="PTM">
    <text evidence="1">N- and O-linked glycosylated. Sialoglycoprotein (By similarity).</text>
</comment>
<comment type="similarity">
    <text evidence="12">Belongs to the podocalyxin family.</text>
</comment>
<accession>O00592</accession>
<accession>A6NHX8</accession>
<accession>Q52LZ7</accession>
<accession>Q53ER6</accession>
<protein>
    <recommendedName>
        <fullName>Podocalyxin</fullName>
    </recommendedName>
    <alternativeName>
        <fullName>GCTM-2 antigen</fullName>
    </alternativeName>
    <alternativeName>
        <fullName>Gp200</fullName>
    </alternativeName>
    <alternativeName>
        <fullName>Podocalyxin-like protein 1</fullName>
        <shortName>PC</shortName>
        <shortName>PCLP-1</shortName>
    </alternativeName>
</protein>
<feature type="signal peptide" evidence="3">
    <location>
        <begin position="1"/>
        <end position="22"/>
    </location>
</feature>
<feature type="chain" id="PRO_0000024754" description="Podocalyxin">
    <location>
        <begin position="23"/>
        <end position="558"/>
    </location>
</feature>
<feature type="topological domain" description="Extracellular" evidence="3">
    <location>
        <begin position="23"/>
        <end position="461"/>
    </location>
</feature>
<feature type="transmembrane region" description="Helical" evidence="3">
    <location>
        <begin position="462"/>
        <end position="482"/>
    </location>
</feature>
<feature type="topological domain" description="Cytoplasmic" evidence="3">
    <location>
        <begin position="483"/>
        <end position="558"/>
    </location>
</feature>
<feature type="region of interest" description="Disordered" evidence="4">
    <location>
        <begin position="20"/>
        <end position="50"/>
    </location>
</feature>
<feature type="region of interest" description="Disordered" evidence="4">
    <location>
        <begin position="83"/>
        <end position="210"/>
    </location>
</feature>
<feature type="region of interest" description="Disordered" evidence="4">
    <location>
        <begin position="270"/>
        <end position="338"/>
    </location>
</feature>
<feature type="compositionally biased region" description="Pro residues" evidence="4">
    <location>
        <begin position="20"/>
        <end position="29"/>
    </location>
</feature>
<feature type="compositionally biased region" description="Polar residues" evidence="4">
    <location>
        <begin position="32"/>
        <end position="50"/>
    </location>
</feature>
<feature type="compositionally biased region" description="Polar residues" evidence="4">
    <location>
        <begin position="83"/>
        <end position="107"/>
    </location>
</feature>
<feature type="compositionally biased region" description="Low complexity" evidence="4">
    <location>
        <begin position="125"/>
        <end position="142"/>
    </location>
</feature>
<feature type="compositionally biased region" description="Polar residues" evidence="4">
    <location>
        <begin position="143"/>
        <end position="173"/>
    </location>
</feature>
<feature type="compositionally biased region" description="Polar residues" evidence="4">
    <location>
        <begin position="190"/>
        <end position="204"/>
    </location>
</feature>
<feature type="compositionally biased region" description="Polar residues" evidence="4">
    <location>
        <begin position="270"/>
        <end position="302"/>
    </location>
</feature>
<feature type="compositionally biased region" description="Low complexity" evidence="4">
    <location>
        <begin position="313"/>
        <end position="324"/>
    </location>
</feature>
<feature type="modified residue" description="Phosphothreonine" evidence="2">
    <location>
        <position position="518"/>
    </location>
</feature>
<feature type="modified residue" description="Phosphoserine" evidence="14">
    <location>
        <position position="529"/>
    </location>
</feature>
<feature type="modified residue" description="Phosphoserine" evidence="13">
    <location>
        <position position="537"/>
    </location>
</feature>
<feature type="modified residue" description="Phosphothreonine" evidence="14">
    <location>
        <position position="556"/>
    </location>
</feature>
<feature type="glycosylation site" description="N-linked (GlcNAc...) asparagine" evidence="3">
    <location>
        <position position="33"/>
    </location>
</feature>
<feature type="glycosylation site" description="N-linked (GlcNAc...) asparagine" evidence="3">
    <location>
        <position position="43"/>
    </location>
</feature>
<feature type="glycosylation site" description="N-linked (GlcNAc...) asparagine" evidence="3">
    <location>
        <position position="104"/>
    </location>
</feature>
<feature type="glycosylation site" description="N-linked (GlcNAc...) asparagine" evidence="3">
    <location>
        <position position="144"/>
    </location>
</feature>
<feature type="glycosylation site" description="N-linked (GlcNAc...) asparagine" evidence="3">
    <location>
        <position position="360"/>
    </location>
</feature>
<feature type="splice variant" id="VSP_037220" description="In isoform 2." evidence="9 10 11">
    <original>LETVFHHVSQAGLELLTSGDLPTLASQSAGITA</original>
    <variation>P</variation>
    <location>
        <begin position="236"/>
        <end position="268"/>
    </location>
</feature>
<feature type="sequence variant" id="VAR_012236">
    <original>T</original>
    <variation>R</variation>
    <location>
        <position position="60"/>
    </location>
</feature>
<feature type="sequence variant" id="VAR_055237" description="In dbSNP:rs3735035.">
    <original>G</original>
    <variation>S</variation>
    <location>
        <position position="112"/>
    </location>
</feature>
<feature type="sequence variant" id="VAR_062136" description="In dbSNP:rs55698400.">
    <original>T</original>
    <variation>P</variation>
    <location>
        <position position="126"/>
    </location>
</feature>
<feature type="sequence variant" id="VAR_012237" description="In dbSNP:rs12670788." evidence="7">
    <original>S</original>
    <variation>L</variation>
    <location>
        <position position="194"/>
    </location>
</feature>
<feature type="sequence variant" id="VAR_060090" description="In dbSNP:rs35893129.">
    <original>P</original>
    <variation>A</variation>
    <location>
        <position position="298"/>
    </location>
</feature>
<feature type="sequence variant" id="VAR_055238" description="In dbSNP:rs3212298." evidence="8">
    <original>V</original>
    <variation>I</variation>
    <location>
        <position position="358"/>
    </location>
</feature>
<feature type="sequence conflict" description="In Ref. 1; AAB61574." evidence="12" ref="1">
    <original>S</original>
    <variation>SPS</variation>
    <location>
        <position position="31"/>
    </location>
</feature>
<feature type="sequence conflict" description="In Ref. 8; AA sequence." evidence="12" ref="8">
    <original>G</original>
    <variation>Q</variation>
    <location>
        <position position="404"/>
    </location>
</feature>
<gene>
    <name type="primary">PODXL</name>
    <name type="synonym">PCLP</name>
    <name type="synonym">PCLP1</name>
</gene>
<reference key="1">
    <citation type="journal article" date="1997" name="J. Biol. Chem.">
        <title>Molecular cloning and characterization of human podocalyxin-like protein. Orthologous relationship to rabbit PCLP1 and rat podocalyxin.</title>
        <authorList>
            <person name="Kershaw D.B."/>
            <person name="Beck S.G."/>
            <person name="Wharram B.L."/>
            <person name="Wiggins J.E."/>
            <person name="Goyal M."/>
            <person name="Thomas P.E."/>
            <person name="Wiggins R.C."/>
        </authorList>
    </citation>
    <scope>NUCLEOTIDE SEQUENCE [MRNA] (ISOFORM 2)</scope>
    <scope>VARIANT LEU-194</scope>
</reference>
<reference key="2">
    <citation type="submission" date="2005-04" db="EMBL/GenBank/DDBJ databases">
        <authorList>
            <person name="Totoki Y."/>
            <person name="Toyoda A."/>
            <person name="Takeda T."/>
            <person name="Sakaki Y."/>
            <person name="Tanaka A."/>
            <person name="Yokoyama S."/>
        </authorList>
    </citation>
    <scope>NUCLEOTIDE SEQUENCE [LARGE SCALE MRNA] (ISOFORM 2)</scope>
    <scope>VARIANT ILE-358</scope>
    <source>
        <tissue>Heart</tissue>
    </source>
</reference>
<reference key="3">
    <citation type="journal article" date="2003" name="Nature">
        <title>The DNA sequence of human chromosome 7.</title>
        <authorList>
            <person name="Hillier L.W."/>
            <person name="Fulton R.S."/>
            <person name="Fulton L.A."/>
            <person name="Graves T.A."/>
            <person name="Pepin K.H."/>
            <person name="Wagner-McPherson C."/>
            <person name="Layman D."/>
            <person name="Maas J."/>
            <person name="Jaeger S."/>
            <person name="Walker R."/>
            <person name="Wylie K."/>
            <person name="Sekhon M."/>
            <person name="Becker M.C."/>
            <person name="O'Laughlin M.D."/>
            <person name="Schaller M.E."/>
            <person name="Fewell G.A."/>
            <person name="Delehaunty K.D."/>
            <person name="Miner T.L."/>
            <person name="Nash W.E."/>
            <person name="Cordes M."/>
            <person name="Du H."/>
            <person name="Sun H."/>
            <person name="Edwards J."/>
            <person name="Bradshaw-Cordum H."/>
            <person name="Ali J."/>
            <person name="Andrews S."/>
            <person name="Isak A."/>
            <person name="Vanbrunt A."/>
            <person name="Nguyen C."/>
            <person name="Du F."/>
            <person name="Lamar B."/>
            <person name="Courtney L."/>
            <person name="Kalicki J."/>
            <person name="Ozersky P."/>
            <person name="Bielicki L."/>
            <person name="Scott K."/>
            <person name="Holmes A."/>
            <person name="Harkins R."/>
            <person name="Harris A."/>
            <person name="Strong C.M."/>
            <person name="Hou S."/>
            <person name="Tomlinson C."/>
            <person name="Dauphin-Kohlberg S."/>
            <person name="Kozlowicz-Reilly A."/>
            <person name="Leonard S."/>
            <person name="Rohlfing T."/>
            <person name="Rock S.M."/>
            <person name="Tin-Wollam A.-M."/>
            <person name="Abbott A."/>
            <person name="Minx P."/>
            <person name="Maupin R."/>
            <person name="Strowmatt C."/>
            <person name="Latreille P."/>
            <person name="Miller N."/>
            <person name="Johnson D."/>
            <person name="Murray J."/>
            <person name="Woessner J.P."/>
            <person name="Wendl M.C."/>
            <person name="Yang S.-P."/>
            <person name="Schultz B.R."/>
            <person name="Wallis J.W."/>
            <person name="Spieth J."/>
            <person name="Bieri T.A."/>
            <person name="Nelson J.O."/>
            <person name="Berkowicz N."/>
            <person name="Wohldmann P.E."/>
            <person name="Cook L.L."/>
            <person name="Hickenbotham M.T."/>
            <person name="Eldred J."/>
            <person name="Williams D."/>
            <person name="Bedell J.A."/>
            <person name="Mardis E.R."/>
            <person name="Clifton S.W."/>
            <person name="Chissoe S.L."/>
            <person name="Marra M.A."/>
            <person name="Raymond C."/>
            <person name="Haugen E."/>
            <person name="Gillett W."/>
            <person name="Zhou Y."/>
            <person name="James R."/>
            <person name="Phelps K."/>
            <person name="Iadanoto S."/>
            <person name="Bubb K."/>
            <person name="Simms E."/>
            <person name="Levy R."/>
            <person name="Clendenning J."/>
            <person name="Kaul R."/>
            <person name="Kent W.J."/>
            <person name="Furey T.S."/>
            <person name="Baertsch R.A."/>
            <person name="Brent M.R."/>
            <person name="Keibler E."/>
            <person name="Flicek P."/>
            <person name="Bork P."/>
            <person name="Suyama M."/>
            <person name="Bailey J.A."/>
            <person name="Portnoy M.E."/>
            <person name="Torrents D."/>
            <person name="Chinwalla A.T."/>
            <person name="Gish W.R."/>
            <person name="Eddy S.R."/>
            <person name="McPherson J.D."/>
            <person name="Olson M.V."/>
            <person name="Eichler E.E."/>
            <person name="Green E.D."/>
            <person name="Waterston R.H."/>
            <person name="Wilson R.K."/>
        </authorList>
    </citation>
    <scope>NUCLEOTIDE SEQUENCE [LARGE SCALE GENOMIC DNA]</scope>
</reference>
<reference key="4">
    <citation type="journal article" date="2003" name="Science">
        <title>Human chromosome 7: DNA sequence and biology.</title>
        <authorList>
            <person name="Scherer S.W."/>
            <person name="Cheung J."/>
            <person name="MacDonald J.R."/>
            <person name="Osborne L.R."/>
            <person name="Nakabayashi K."/>
            <person name="Herbrick J.-A."/>
            <person name="Carson A.R."/>
            <person name="Parker-Katiraee L."/>
            <person name="Skaug J."/>
            <person name="Khaja R."/>
            <person name="Zhang J."/>
            <person name="Hudek A.K."/>
            <person name="Li M."/>
            <person name="Haddad M."/>
            <person name="Duggan G.E."/>
            <person name="Fernandez B.A."/>
            <person name="Kanematsu E."/>
            <person name="Gentles S."/>
            <person name="Christopoulos C.C."/>
            <person name="Choufani S."/>
            <person name="Kwasnicka D."/>
            <person name="Zheng X.H."/>
            <person name="Lai Z."/>
            <person name="Nusskern D.R."/>
            <person name="Zhang Q."/>
            <person name="Gu Z."/>
            <person name="Lu F."/>
            <person name="Zeesman S."/>
            <person name="Nowaczyk M.J."/>
            <person name="Teshima I."/>
            <person name="Chitayat D."/>
            <person name="Shuman C."/>
            <person name="Weksberg R."/>
            <person name="Zackai E.H."/>
            <person name="Grebe T.A."/>
            <person name="Cox S.R."/>
            <person name="Kirkpatrick S.J."/>
            <person name="Rahman N."/>
            <person name="Friedman J.M."/>
            <person name="Heng H.H.Q."/>
            <person name="Pelicci P.G."/>
            <person name="Lo-Coco F."/>
            <person name="Belloni E."/>
            <person name="Shaffer L.G."/>
            <person name="Pober B."/>
            <person name="Morton C.C."/>
            <person name="Gusella J.F."/>
            <person name="Bruns G.A.P."/>
            <person name="Korf B.R."/>
            <person name="Quade B.J."/>
            <person name="Ligon A.H."/>
            <person name="Ferguson H."/>
            <person name="Higgins A.W."/>
            <person name="Leach N.T."/>
            <person name="Herrick S.R."/>
            <person name="Lemyre E."/>
            <person name="Farra C.G."/>
            <person name="Kim H.-G."/>
            <person name="Summers A.M."/>
            <person name="Gripp K.W."/>
            <person name="Roberts W."/>
            <person name="Szatmari P."/>
            <person name="Winsor E.J.T."/>
            <person name="Grzeschik K.-H."/>
            <person name="Teebi A."/>
            <person name="Minassian B.A."/>
            <person name="Kere J."/>
            <person name="Armengol L."/>
            <person name="Pujana M.A."/>
            <person name="Estivill X."/>
            <person name="Wilson M.D."/>
            <person name="Koop B.F."/>
            <person name="Tosi S."/>
            <person name="Moore G.E."/>
            <person name="Boright A.P."/>
            <person name="Zlotorynski E."/>
            <person name="Kerem B."/>
            <person name="Kroisel P.M."/>
            <person name="Petek E."/>
            <person name="Oscier D.G."/>
            <person name="Mould S.J."/>
            <person name="Doehner H."/>
            <person name="Doehner K."/>
            <person name="Rommens J.M."/>
            <person name="Vincent J.B."/>
            <person name="Venter J.C."/>
            <person name="Li P.W."/>
            <person name="Mural R.J."/>
            <person name="Adams M.D."/>
            <person name="Tsui L.-C."/>
        </authorList>
    </citation>
    <scope>NUCLEOTIDE SEQUENCE [LARGE SCALE GENOMIC DNA]</scope>
</reference>
<reference key="5">
    <citation type="submission" date="2005-07" db="EMBL/GenBank/DDBJ databases">
        <authorList>
            <person name="Mural R.J."/>
            <person name="Istrail S."/>
            <person name="Sutton G.G."/>
            <person name="Florea L."/>
            <person name="Halpern A.L."/>
            <person name="Mobarry C.M."/>
            <person name="Lippert R."/>
            <person name="Walenz B."/>
            <person name="Shatkay H."/>
            <person name="Dew I."/>
            <person name="Miller J.R."/>
            <person name="Flanigan M.J."/>
            <person name="Edwards N.J."/>
            <person name="Bolanos R."/>
            <person name="Fasulo D."/>
            <person name="Halldorsson B.V."/>
            <person name="Hannenhalli S."/>
            <person name="Turner R."/>
            <person name="Yooseph S."/>
            <person name="Lu F."/>
            <person name="Nusskern D.R."/>
            <person name="Shue B.C."/>
            <person name="Zheng X.H."/>
            <person name="Zhong F."/>
            <person name="Delcher A.L."/>
            <person name="Huson D.H."/>
            <person name="Kravitz S.A."/>
            <person name="Mouchard L."/>
            <person name="Reinert K."/>
            <person name="Remington K.A."/>
            <person name="Clark A.G."/>
            <person name="Waterman M.S."/>
            <person name="Eichler E.E."/>
            <person name="Adams M.D."/>
            <person name="Hunkapiller M.W."/>
            <person name="Myers E.W."/>
            <person name="Venter J.C."/>
        </authorList>
    </citation>
    <scope>NUCLEOTIDE SEQUENCE [LARGE SCALE GENOMIC DNA]</scope>
</reference>
<reference key="6">
    <citation type="journal article" date="2004" name="Genome Res.">
        <title>The status, quality, and expansion of the NIH full-length cDNA project: the Mammalian Gene Collection (MGC).</title>
        <authorList>
            <consortium name="The MGC Project Team"/>
        </authorList>
    </citation>
    <scope>NUCLEOTIDE SEQUENCE [LARGE SCALE MRNA] (ISOFORM 2)</scope>
    <source>
        <tissue>Liver</tissue>
    </source>
</reference>
<reference key="7">
    <citation type="submission" date="2003-05" db="EMBL/GenBank/DDBJ databases">
        <authorList>
            <person name="Suzuki Y."/>
            <person name="Yamashita R."/>
            <person name="Shirota M."/>
            <person name="Sakakibara Y."/>
            <person name="Chiba J."/>
            <person name="Nakai K."/>
            <person name="Sugano S."/>
        </authorList>
    </citation>
    <scope>NUCLEOTIDE SEQUENCE [LARGE SCALE MRNA] OF 120-310 (ISOFORM 1)</scope>
</reference>
<reference key="8">
    <citation type="journal article" date="2003" name="Biochem. Biophys. Res. Commun.">
        <title>Human embryonal carcinoma tumor antigen, Gp200/GCTM-2, is podocalyxin.</title>
        <authorList>
            <person name="Schopperle W.M."/>
            <person name="Kershaw D.B."/>
            <person name="DeWolf W.C."/>
        </authorList>
    </citation>
    <scope>PROTEIN SEQUENCE OF 399-411 AND 445-372</scope>
</reference>
<reference key="9">
    <citation type="journal article" date="2007" name="Cancer Res.">
        <title>Podocalyxin increases the aggressive phenotype of breast and prostate cancer cells in vitro through its interaction with ezrin.</title>
        <authorList>
            <person name="Sizemore S."/>
            <person name="Cicek M."/>
            <person name="Sizemore N."/>
            <person name="Ng K.P."/>
            <person name="Casey G."/>
        </authorList>
    </citation>
    <scope>FUNCTION</scope>
    <scope>INTERACTION WITH EZR</scope>
    <scope>SUBCELLULAR LOCATION</scope>
</reference>
<reference key="10">
    <citation type="journal article" date="2008" name="Exp. Cell Res.">
        <title>Expression of podocalyxin enhances the adherence, migration, and intercellular communication of cells.</title>
        <authorList>
            <person name="Larrucea S."/>
            <person name="Butta N."/>
            <person name="Arias-Salgado E.G."/>
            <person name="Alonso-Martin S."/>
            <person name="Ayuso M.S."/>
            <person name="Parrilla R."/>
        </authorList>
    </citation>
    <scope>FUNCTION</scope>
    <scope>SUBCELLULAR LOCATION</scope>
</reference>
<reference key="11">
    <citation type="journal article" date="2008" name="Proc. Natl. Acad. Sci. U.S.A.">
        <title>A quantitative atlas of mitotic phosphorylation.</title>
        <authorList>
            <person name="Dephoure N."/>
            <person name="Zhou C."/>
            <person name="Villen J."/>
            <person name="Beausoleil S.A."/>
            <person name="Bakalarski C.E."/>
            <person name="Elledge S.J."/>
            <person name="Gygi S.P."/>
        </authorList>
    </citation>
    <scope>IDENTIFICATION BY MASS SPECTROMETRY [LARGE SCALE ANALYSIS]</scope>
    <source>
        <tissue>Cervix carcinoma</tissue>
    </source>
</reference>
<reference key="12">
    <citation type="journal article" date="2010" name="Sci. Signal.">
        <title>Quantitative phosphoproteomics reveals widespread full phosphorylation site occupancy during mitosis.</title>
        <authorList>
            <person name="Olsen J.V."/>
            <person name="Vermeulen M."/>
            <person name="Santamaria A."/>
            <person name="Kumar C."/>
            <person name="Miller M.L."/>
            <person name="Jensen L.J."/>
            <person name="Gnad F."/>
            <person name="Cox J."/>
            <person name="Jensen T.S."/>
            <person name="Nigg E.A."/>
            <person name="Brunak S."/>
            <person name="Mann M."/>
        </authorList>
    </citation>
    <scope>PHOSPHORYLATION [LARGE SCALE ANALYSIS] AT SER-537</scope>
    <scope>IDENTIFICATION BY MASS SPECTROMETRY [LARGE SCALE ANALYSIS]</scope>
    <source>
        <tissue>Cervix carcinoma</tissue>
    </source>
</reference>
<reference key="13">
    <citation type="journal article" date="2011" name="BMC Syst. Biol.">
        <title>Initial characterization of the human central proteome.</title>
        <authorList>
            <person name="Burkard T.R."/>
            <person name="Planyavsky M."/>
            <person name="Kaupe I."/>
            <person name="Breitwieser F.P."/>
            <person name="Buerckstuemmer T."/>
            <person name="Bennett K.L."/>
            <person name="Superti-Furga G."/>
            <person name="Colinge J."/>
        </authorList>
    </citation>
    <scope>IDENTIFICATION BY MASS SPECTROMETRY [LARGE SCALE ANALYSIS]</scope>
</reference>
<reference key="14">
    <citation type="journal article" date="2011" name="Sci. Signal.">
        <title>System-wide temporal characterization of the proteome and phosphoproteome of human embryonic stem cell differentiation.</title>
        <authorList>
            <person name="Rigbolt K.T."/>
            <person name="Prokhorova T.A."/>
            <person name="Akimov V."/>
            <person name="Henningsen J."/>
            <person name="Johansen P.T."/>
            <person name="Kratchmarova I."/>
            <person name="Kassem M."/>
            <person name="Mann M."/>
            <person name="Olsen J.V."/>
            <person name="Blagoev B."/>
        </authorList>
    </citation>
    <scope>PHOSPHORYLATION [LARGE SCALE ANALYSIS] AT SER-529 AND THR-556</scope>
    <scope>IDENTIFICATION BY MASS SPECTROMETRY [LARGE SCALE ANALYSIS]</scope>
</reference>
<reference key="15">
    <citation type="journal article" date="2015" name="Proteomics">
        <title>N-terminome analysis of the human mitochondrial proteome.</title>
        <authorList>
            <person name="Vaca Jacome A.S."/>
            <person name="Rabilloud T."/>
            <person name="Schaeffer-Reiss C."/>
            <person name="Rompais M."/>
            <person name="Ayoub D."/>
            <person name="Lane L."/>
            <person name="Bairoch A."/>
            <person name="Van Dorsselaer A."/>
            <person name="Carapito C."/>
        </authorList>
    </citation>
    <scope>IDENTIFICATION BY MASS SPECTROMETRY [LARGE SCALE ANALYSIS]</scope>
</reference>
<keyword id="KW-0025">Alternative splicing</keyword>
<keyword id="KW-0130">Cell adhesion</keyword>
<keyword id="KW-1003">Cell membrane</keyword>
<keyword id="KW-0966">Cell projection</keyword>
<keyword id="KW-0903">Direct protein sequencing</keyword>
<keyword id="KW-0325">Glycoprotein</keyword>
<keyword id="KW-0472">Membrane</keyword>
<keyword id="KW-0597">Phosphoprotein</keyword>
<keyword id="KW-1267">Proteomics identification</keyword>
<keyword id="KW-1185">Reference proteome</keyword>
<keyword id="KW-0732">Signal</keyword>
<keyword id="KW-0812">Transmembrane</keyword>
<keyword id="KW-1133">Transmembrane helix</keyword>
<evidence type="ECO:0000250" key="1"/>
<evidence type="ECO:0000250" key="2">
    <source>
        <dbReference type="UniProtKB" id="Q9R0M4"/>
    </source>
</evidence>
<evidence type="ECO:0000255" key="3"/>
<evidence type="ECO:0000256" key="4">
    <source>
        <dbReference type="SAM" id="MobiDB-lite"/>
    </source>
</evidence>
<evidence type="ECO:0000269" key="5">
    <source>
    </source>
</evidence>
<evidence type="ECO:0000269" key="6">
    <source>
    </source>
</evidence>
<evidence type="ECO:0000269" key="7">
    <source>
    </source>
</evidence>
<evidence type="ECO:0000269" key="8">
    <source ref="2"/>
</evidence>
<evidence type="ECO:0000303" key="9">
    <source>
    </source>
</evidence>
<evidence type="ECO:0000303" key="10">
    <source>
    </source>
</evidence>
<evidence type="ECO:0000303" key="11">
    <source ref="2"/>
</evidence>
<evidence type="ECO:0000305" key="12"/>
<evidence type="ECO:0007744" key="13">
    <source>
    </source>
</evidence>
<evidence type="ECO:0007744" key="14">
    <source>
    </source>
</evidence>